<comment type="function">
    <text evidence="1">The alpha subunit is responsible for the aldol cleavage of indoleglycerol phosphate to indole and glyceraldehyde 3-phosphate.</text>
</comment>
<comment type="catalytic activity">
    <reaction evidence="1">
        <text>(1S,2R)-1-C-(indol-3-yl)glycerol 3-phosphate + L-serine = D-glyceraldehyde 3-phosphate + L-tryptophan + H2O</text>
        <dbReference type="Rhea" id="RHEA:10532"/>
        <dbReference type="ChEBI" id="CHEBI:15377"/>
        <dbReference type="ChEBI" id="CHEBI:33384"/>
        <dbReference type="ChEBI" id="CHEBI:57912"/>
        <dbReference type="ChEBI" id="CHEBI:58866"/>
        <dbReference type="ChEBI" id="CHEBI:59776"/>
        <dbReference type="EC" id="4.2.1.20"/>
    </reaction>
</comment>
<comment type="pathway">
    <text evidence="1">Amino-acid biosynthesis; L-tryptophan biosynthesis; L-tryptophan from chorismate: step 5/5.</text>
</comment>
<comment type="subunit">
    <text evidence="1">Tetramer of two alpha and two beta chains.</text>
</comment>
<comment type="similarity">
    <text evidence="1">Belongs to the TrpA family.</text>
</comment>
<reference key="1">
    <citation type="journal article" date="2003" name="J. Bacteriol.">
        <title>Complete genome sequence of the ammonia-oxidizing bacterium and obligate chemolithoautotroph Nitrosomonas europaea.</title>
        <authorList>
            <person name="Chain P."/>
            <person name="Lamerdin J.E."/>
            <person name="Larimer F.W."/>
            <person name="Regala W."/>
            <person name="Lao V."/>
            <person name="Land M.L."/>
            <person name="Hauser L."/>
            <person name="Hooper A.B."/>
            <person name="Klotz M.G."/>
            <person name="Norton J."/>
            <person name="Sayavedra-Soto L.A."/>
            <person name="Arciero D.M."/>
            <person name="Hommes N.G."/>
            <person name="Whittaker M.M."/>
            <person name="Arp D.J."/>
        </authorList>
    </citation>
    <scope>NUCLEOTIDE SEQUENCE [LARGE SCALE GENOMIC DNA]</scope>
    <source>
        <strain>ATCC 19718 / CIP 103999 / KCTC 2705 / NBRC 14298</strain>
    </source>
</reference>
<gene>
    <name evidence="1" type="primary">trpA</name>
    <name type="ordered locus">NE0694</name>
</gene>
<organism>
    <name type="scientific">Nitrosomonas europaea (strain ATCC 19718 / CIP 103999 / KCTC 2705 / NBRC 14298)</name>
    <dbReference type="NCBI Taxonomy" id="228410"/>
    <lineage>
        <taxon>Bacteria</taxon>
        <taxon>Pseudomonadati</taxon>
        <taxon>Pseudomonadota</taxon>
        <taxon>Betaproteobacteria</taxon>
        <taxon>Nitrosomonadales</taxon>
        <taxon>Nitrosomonadaceae</taxon>
        <taxon>Nitrosomonas</taxon>
    </lineage>
</organism>
<accession>Q82WI1</accession>
<protein>
    <recommendedName>
        <fullName evidence="1">Tryptophan synthase alpha chain</fullName>
        <ecNumber evidence="1">4.2.1.20</ecNumber>
    </recommendedName>
</protein>
<evidence type="ECO:0000255" key="1">
    <source>
        <dbReference type="HAMAP-Rule" id="MF_00131"/>
    </source>
</evidence>
<name>TRPA_NITEU</name>
<sequence length="275" mass="30180">MNRIQSVFSQLKSQNRAALIPFITAGDPDATTTVALMHRLTQAGVDLIELGVPFSDPMADGPTIQRSSERALKHHISLKDVFSMVAEFRKTNQSTPVVLMGYANPIEAMGYKDFVQTAGHAGVDGVLVVDYPPEECTEWVRYLKEQNIDPIFLLSPTTPESRIRRVAELARGYVYYVSLKGVTGASHLDLHEVGDKLSQLRSYINIPIGVGFGIRDEQTARRIAEQADAVVIGSRIVEEIEHSPAADLLANVGALVESLRRAIDAKSDHSSITEK</sequence>
<feature type="chain" id="PRO_0000098816" description="Tryptophan synthase alpha chain">
    <location>
        <begin position="1"/>
        <end position="275"/>
    </location>
</feature>
<feature type="active site" description="Proton acceptor" evidence="1">
    <location>
        <position position="49"/>
    </location>
</feature>
<feature type="active site" description="Proton acceptor" evidence="1">
    <location>
        <position position="60"/>
    </location>
</feature>
<dbReference type="EC" id="4.2.1.20" evidence="1"/>
<dbReference type="EMBL" id="AL954747">
    <property type="protein sequence ID" value="CAD84605.1"/>
    <property type="molecule type" value="Genomic_DNA"/>
</dbReference>
<dbReference type="RefSeq" id="WP_011111315.1">
    <property type="nucleotide sequence ID" value="NC_004757.1"/>
</dbReference>
<dbReference type="SMR" id="Q82WI1"/>
<dbReference type="STRING" id="228410.NE0694"/>
<dbReference type="GeneID" id="87103889"/>
<dbReference type="KEGG" id="neu:NE0694"/>
<dbReference type="eggNOG" id="COG0159">
    <property type="taxonomic scope" value="Bacteria"/>
</dbReference>
<dbReference type="HOGENOM" id="CLU_016734_0_0_4"/>
<dbReference type="OrthoDB" id="9804578at2"/>
<dbReference type="PhylomeDB" id="Q82WI1"/>
<dbReference type="UniPathway" id="UPA00035">
    <property type="reaction ID" value="UER00044"/>
</dbReference>
<dbReference type="Proteomes" id="UP000001416">
    <property type="component" value="Chromosome"/>
</dbReference>
<dbReference type="GO" id="GO:0005829">
    <property type="term" value="C:cytosol"/>
    <property type="evidence" value="ECO:0007669"/>
    <property type="project" value="TreeGrafter"/>
</dbReference>
<dbReference type="GO" id="GO:0004834">
    <property type="term" value="F:tryptophan synthase activity"/>
    <property type="evidence" value="ECO:0007669"/>
    <property type="project" value="UniProtKB-UniRule"/>
</dbReference>
<dbReference type="CDD" id="cd04724">
    <property type="entry name" value="Tryptophan_synthase_alpha"/>
    <property type="match status" value="1"/>
</dbReference>
<dbReference type="FunFam" id="3.20.20.70:FF:000037">
    <property type="entry name" value="Tryptophan synthase alpha chain"/>
    <property type="match status" value="1"/>
</dbReference>
<dbReference type="Gene3D" id="3.20.20.70">
    <property type="entry name" value="Aldolase class I"/>
    <property type="match status" value="1"/>
</dbReference>
<dbReference type="HAMAP" id="MF_00131">
    <property type="entry name" value="Trp_synth_alpha"/>
    <property type="match status" value="1"/>
</dbReference>
<dbReference type="InterPro" id="IPR013785">
    <property type="entry name" value="Aldolase_TIM"/>
</dbReference>
<dbReference type="InterPro" id="IPR011060">
    <property type="entry name" value="RibuloseP-bd_barrel"/>
</dbReference>
<dbReference type="InterPro" id="IPR018204">
    <property type="entry name" value="Trp_synthase_alpha_AS"/>
</dbReference>
<dbReference type="InterPro" id="IPR002028">
    <property type="entry name" value="Trp_synthase_suA"/>
</dbReference>
<dbReference type="NCBIfam" id="TIGR00262">
    <property type="entry name" value="trpA"/>
    <property type="match status" value="1"/>
</dbReference>
<dbReference type="PANTHER" id="PTHR43406:SF1">
    <property type="entry name" value="TRYPTOPHAN SYNTHASE ALPHA CHAIN, CHLOROPLASTIC"/>
    <property type="match status" value="1"/>
</dbReference>
<dbReference type="PANTHER" id="PTHR43406">
    <property type="entry name" value="TRYPTOPHAN SYNTHASE, ALPHA CHAIN"/>
    <property type="match status" value="1"/>
</dbReference>
<dbReference type="Pfam" id="PF00290">
    <property type="entry name" value="Trp_syntA"/>
    <property type="match status" value="1"/>
</dbReference>
<dbReference type="SUPFAM" id="SSF51366">
    <property type="entry name" value="Ribulose-phoshate binding barrel"/>
    <property type="match status" value="1"/>
</dbReference>
<dbReference type="PROSITE" id="PS00167">
    <property type="entry name" value="TRP_SYNTHASE_ALPHA"/>
    <property type="match status" value="1"/>
</dbReference>
<proteinExistence type="inferred from homology"/>
<keyword id="KW-0028">Amino-acid biosynthesis</keyword>
<keyword id="KW-0057">Aromatic amino acid biosynthesis</keyword>
<keyword id="KW-0456">Lyase</keyword>
<keyword id="KW-1185">Reference proteome</keyword>
<keyword id="KW-0822">Tryptophan biosynthesis</keyword>